<keyword id="KW-0997">Cell inner membrane</keyword>
<keyword id="KW-1003">Cell membrane</keyword>
<keyword id="KW-0350">Heme biosynthesis</keyword>
<keyword id="KW-0472">Membrane</keyword>
<keyword id="KW-1185">Reference proteome</keyword>
<keyword id="KW-0808">Transferase</keyword>
<keyword id="KW-0812">Transmembrane</keyword>
<keyword id="KW-1133">Transmembrane helix</keyword>
<feature type="chain" id="PRO_0000326893" description="Protoheme IX farnesyltransferase">
    <location>
        <begin position="1"/>
        <end position="296"/>
    </location>
</feature>
<feature type="topological domain" description="Cytoplasmic" evidence="1">
    <location>
        <begin position="1"/>
        <end position="9"/>
    </location>
</feature>
<feature type="transmembrane region" description="Helical" evidence="1">
    <location>
        <begin position="10"/>
        <end position="28"/>
    </location>
</feature>
<feature type="topological domain" description="Periplasmic" evidence="1">
    <location>
        <begin position="29"/>
        <end position="37"/>
    </location>
</feature>
<feature type="transmembrane region" description="Helical" evidence="1">
    <location>
        <begin position="38"/>
        <end position="56"/>
    </location>
</feature>
<feature type="topological domain" description="Cytoplasmic" evidence="1">
    <location>
        <begin position="57"/>
        <end position="78"/>
    </location>
</feature>
<feature type="transmembrane region" description="Helical" evidence="1">
    <location>
        <begin position="79"/>
        <end position="97"/>
    </location>
</feature>
<feature type="topological domain" description="Periplasmic" evidence="1">
    <location>
        <begin position="98"/>
        <end position="107"/>
    </location>
</feature>
<feature type="transmembrane region" description="Helical" evidence="1">
    <location>
        <begin position="108"/>
        <end position="126"/>
    </location>
</feature>
<feature type="topological domain" description="Cytoplasmic" evidence="1">
    <location>
        <begin position="127"/>
        <end position="197"/>
    </location>
</feature>
<feature type="transmembrane region" description="Helical" evidence="1">
    <location>
        <begin position="198"/>
        <end position="216"/>
    </location>
</feature>
<feature type="topological domain" description="Periplasmic" evidence="1">
    <location>
        <begin position="217"/>
        <end position="228"/>
    </location>
</feature>
<feature type="transmembrane region" description="Helical" evidence="1">
    <location>
        <begin position="229"/>
        <end position="247"/>
    </location>
</feature>
<feature type="topological domain" description="Cytoplasmic" evidence="1">
    <location>
        <begin position="248"/>
        <end position="268"/>
    </location>
</feature>
<feature type="transmembrane region" description="Helical" evidence="1">
    <location>
        <begin position="269"/>
        <end position="287"/>
    </location>
</feature>
<feature type="topological domain" description="Periplasmic" evidence="1">
    <location>
        <begin position="288"/>
        <end position="296"/>
    </location>
</feature>
<dbReference type="EC" id="2.5.1.141" evidence="1"/>
<dbReference type="EMBL" id="CP000468">
    <property type="protein sequence ID" value="ABI99886.1"/>
    <property type="status" value="ALT_INIT"/>
    <property type="molecule type" value="Genomic_DNA"/>
</dbReference>
<dbReference type="RefSeq" id="WP_000576425.1">
    <property type="nucleotide sequence ID" value="NZ_CADILS010000009.1"/>
</dbReference>
<dbReference type="SMR" id="A1A897"/>
<dbReference type="KEGG" id="ecv:APECO1_1583"/>
<dbReference type="HOGENOM" id="CLU_029631_0_0_6"/>
<dbReference type="UniPathway" id="UPA00834">
    <property type="reaction ID" value="UER00712"/>
</dbReference>
<dbReference type="Proteomes" id="UP000008216">
    <property type="component" value="Chromosome"/>
</dbReference>
<dbReference type="GO" id="GO:0005886">
    <property type="term" value="C:plasma membrane"/>
    <property type="evidence" value="ECO:0007669"/>
    <property type="project" value="UniProtKB-SubCell"/>
</dbReference>
<dbReference type="GO" id="GO:0008495">
    <property type="term" value="F:protoheme IX farnesyltransferase activity"/>
    <property type="evidence" value="ECO:0007669"/>
    <property type="project" value="UniProtKB-UniRule"/>
</dbReference>
<dbReference type="GO" id="GO:0048034">
    <property type="term" value="P:heme O biosynthetic process"/>
    <property type="evidence" value="ECO:0007669"/>
    <property type="project" value="UniProtKB-UniRule"/>
</dbReference>
<dbReference type="CDD" id="cd13957">
    <property type="entry name" value="PT_UbiA_Cox10"/>
    <property type="match status" value="1"/>
</dbReference>
<dbReference type="FunFam" id="1.10.357.140:FF:000001">
    <property type="entry name" value="Protoheme IX farnesyltransferase"/>
    <property type="match status" value="1"/>
</dbReference>
<dbReference type="Gene3D" id="1.10.357.140">
    <property type="entry name" value="UbiA prenyltransferase"/>
    <property type="match status" value="1"/>
</dbReference>
<dbReference type="HAMAP" id="MF_00154">
    <property type="entry name" value="CyoE_CtaB"/>
    <property type="match status" value="1"/>
</dbReference>
<dbReference type="InterPro" id="IPR006369">
    <property type="entry name" value="Protohaem_IX_farnesylTrfase"/>
</dbReference>
<dbReference type="InterPro" id="IPR000537">
    <property type="entry name" value="UbiA_prenyltransferase"/>
</dbReference>
<dbReference type="InterPro" id="IPR030470">
    <property type="entry name" value="UbiA_prenylTrfase_CS"/>
</dbReference>
<dbReference type="InterPro" id="IPR044878">
    <property type="entry name" value="UbiA_sf"/>
</dbReference>
<dbReference type="NCBIfam" id="TIGR01473">
    <property type="entry name" value="cyoE_ctaB"/>
    <property type="match status" value="1"/>
</dbReference>
<dbReference type="NCBIfam" id="NF003348">
    <property type="entry name" value="PRK04375.1-1"/>
    <property type="match status" value="1"/>
</dbReference>
<dbReference type="PANTHER" id="PTHR43448">
    <property type="entry name" value="PROTOHEME IX FARNESYLTRANSFERASE, MITOCHONDRIAL"/>
    <property type="match status" value="1"/>
</dbReference>
<dbReference type="PANTHER" id="PTHR43448:SF2">
    <property type="entry name" value="PROTOHEME IX FARNESYLTRANSFERASE, MITOCHONDRIAL"/>
    <property type="match status" value="1"/>
</dbReference>
<dbReference type="Pfam" id="PF01040">
    <property type="entry name" value="UbiA"/>
    <property type="match status" value="1"/>
</dbReference>
<dbReference type="PROSITE" id="PS00943">
    <property type="entry name" value="UBIA"/>
    <property type="match status" value="1"/>
</dbReference>
<comment type="function">
    <text evidence="1">Converts heme B (protoheme IX) to heme O by substitution of the vinyl group on carbon 2 of heme B porphyrin ring with a hydroxyethyl farnesyl side group.</text>
</comment>
<comment type="catalytic activity">
    <reaction evidence="1">
        <text>heme b + (2E,6E)-farnesyl diphosphate + H2O = Fe(II)-heme o + diphosphate</text>
        <dbReference type="Rhea" id="RHEA:28070"/>
        <dbReference type="ChEBI" id="CHEBI:15377"/>
        <dbReference type="ChEBI" id="CHEBI:33019"/>
        <dbReference type="ChEBI" id="CHEBI:60344"/>
        <dbReference type="ChEBI" id="CHEBI:60530"/>
        <dbReference type="ChEBI" id="CHEBI:175763"/>
        <dbReference type="EC" id="2.5.1.141"/>
    </reaction>
</comment>
<comment type="pathway">
    <text evidence="1">Porphyrin-containing compound metabolism; heme O biosynthesis; heme O from protoheme: step 1/1.</text>
</comment>
<comment type="subcellular location">
    <subcellularLocation>
        <location evidence="1">Cell inner membrane</location>
        <topology evidence="1">Multi-pass membrane protein</topology>
    </subcellularLocation>
</comment>
<comment type="miscellaneous">
    <text evidence="1">Carbon 2 of the heme B porphyrin ring is defined according to the Fischer nomenclature.</text>
</comment>
<comment type="similarity">
    <text evidence="1">Belongs to the UbiA prenyltransferase family. Protoheme IX farnesyltransferase subfamily.</text>
</comment>
<comment type="sequence caution" evidence="2">
    <conflict type="erroneous initiation">
        <sequence resource="EMBL-CDS" id="ABI99886"/>
    </conflict>
</comment>
<protein>
    <recommendedName>
        <fullName evidence="1">Protoheme IX farnesyltransferase</fullName>
        <ecNumber evidence="1">2.5.1.141</ecNumber>
    </recommendedName>
    <alternativeName>
        <fullName evidence="1">Heme B farnesyltransferase</fullName>
    </alternativeName>
    <alternativeName>
        <fullName evidence="1">Heme O synthase</fullName>
    </alternativeName>
</protein>
<organism>
    <name type="scientific">Escherichia coli O1:K1 / APEC</name>
    <dbReference type="NCBI Taxonomy" id="405955"/>
    <lineage>
        <taxon>Bacteria</taxon>
        <taxon>Pseudomonadati</taxon>
        <taxon>Pseudomonadota</taxon>
        <taxon>Gammaproteobacteria</taxon>
        <taxon>Enterobacterales</taxon>
        <taxon>Enterobacteriaceae</taxon>
        <taxon>Escherichia</taxon>
    </lineage>
</organism>
<proteinExistence type="inferred from homology"/>
<accession>A1A897</accession>
<sequence>MIFKQYLQVTKPGIIFGNLISVIGGFLLASKGSIDYPLFIYTLVGVSLVVASGCVFNNYIDRDIDRKMERTKNRVLVKGLISPAVSLVYATLLGIAGFMLLWFGANPLACWLGVMGFVVYVGVYSLYMKRHSVYGTLIGSLSGAAPPVIGYCAVTGEFDSGAAILLAIFSLWQMPHSYAIAIFRFKDYQAANIPVLPVVKGISVAKNHITLYIIAFAVATLMLSLGGYAGYKYLVVAAAVSVWWLGMALRGYKVADDRIWARKLFGFSIIAITALSVMMSVDFMVPDSHTLLAAVW</sequence>
<evidence type="ECO:0000255" key="1">
    <source>
        <dbReference type="HAMAP-Rule" id="MF_00154"/>
    </source>
</evidence>
<evidence type="ECO:0000305" key="2"/>
<name>CYOE_ECOK1</name>
<gene>
    <name evidence="1" type="primary">cyoE</name>
    <name type="ordered locus">Ecok1_03930</name>
    <name type="ORF">APECO1_1583</name>
</gene>
<reference key="1">
    <citation type="journal article" date="2007" name="J. Bacteriol.">
        <title>The genome sequence of avian pathogenic Escherichia coli strain O1:K1:H7 shares strong similarities with human extraintestinal pathogenic E. coli genomes.</title>
        <authorList>
            <person name="Johnson T.J."/>
            <person name="Kariyawasam S."/>
            <person name="Wannemuehler Y."/>
            <person name="Mangiamele P."/>
            <person name="Johnson S.J."/>
            <person name="Doetkott C."/>
            <person name="Skyberg J.A."/>
            <person name="Lynne A.M."/>
            <person name="Johnson J.R."/>
            <person name="Nolan L.K."/>
        </authorList>
    </citation>
    <scope>NUCLEOTIDE SEQUENCE [LARGE SCALE GENOMIC DNA]</scope>
</reference>